<gene>
    <name evidence="1" type="primary">purL</name>
    <name type="ordered locus">BH0629</name>
</gene>
<sequence>MSLHREPTATEVKEQKIYREMGLTDEEFALVESILGRLPNYTETGLFSVMWSEHCSYKNSKVLLKKFPIDGDKVLQGPGEGAGIIDIGDEQAVVFKIESHNHPSAIEPYQGAATGVGGILRDVFSMGARPISLLNSLRFGELTSPKVRYLFEEVVAGIAGYGNCVGVPTVGGEVQFDPCYEGNPLVNAMCVGLIDHKDIQKGQAKGVGNTVMYVGASTGRDGIHGATFASEELSEASEEKRPAVQVGDPFMEKLLLEACLELIKSDALVGIQDMGAAGLTSSSAEMASKAGSGIEMNLDHVPQREKGMTPYEMMLSESQERMLIVVKKGREQEIKDIVAHWGLHAVEVGQVTDDKKLRLLHKGEVVADVPVDALAEDAPVYHKPSKVPAYYEAFQSEKTQWIPTIANVKDTLLSLLQQPTIASKEWVYEQYDYMVQTNTVVSPGSDAAVVRIRGTKKALAMTTDCNSRYLFLDPEVGGKIAIAEAARNIVCSGGVPLGVTDCLNYGNPEKPEIFWQLEKSTDGMSEACRELGTPVIGGNVSLYNETNGVAVYPTPVIGMVGLIEDVGHITTQAFKKAGDLIYVIGEAKAEFGGSELQKLVNGEISGKAPAIDLAVEKKRQEQLLEAIRAGAVASAHDIAEGGLAVALAESMMGEAVGADVVIDGEWTTELFAESQSRFLVSVPKEKQAIFESLVEDAIHLGQVTDHPQLNIQDVNGAQVLQASVNEMLEAWKGAIPCLLKSKA</sequence>
<organism>
    <name type="scientific">Halalkalibacterium halodurans (strain ATCC BAA-125 / DSM 18197 / FERM 7344 / JCM 9153 / C-125)</name>
    <name type="common">Bacillus halodurans</name>
    <dbReference type="NCBI Taxonomy" id="272558"/>
    <lineage>
        <taxon>Bacteria</taxon>
        <taxon>Bacillati</taxon>
        <taxon>Bacillota</taxon>
        <taxon>Bacilli</taxon>
        <taxon>Bacillales</taxon>
        <taxon>Bacillaceae</taxon>
        <taxon>Halalkalibacterium (ex Joshi et al. 2022)</taxon>
    </lineage>
</organism>
<evidence type="ECO:0000255" key="1">
    <source>
        <dbReference type="HAMAP-Rule" id="MF_00420"/>
    </source>
</evidence>
<keyword id="KW-0067">ATP-binding</keyword>
<keyword id="KW-0963">Cytoplasm</keyword>
<keyword id="KW-0436">Ligase</keyword>
<keyword id="KW-0460">Magnesium</keyword>
<keyword id="KW-0479">Metal-binding</keyword>
<keyword id="KW-0547">Nucleotide-binding</keyword>
<keyword id="KW-0658">Purine biosynthesis</keyword>
<keyword id="KW-1185">Reference proteome</keyword>
<reference key="1">
    <citation type="journal article" date="2000" name="Nucleic Acids Res.">
        <title>Complete genome sequence of the alkaliphilic bacterium Bacillus halodurans and genomic sequence comparison with Bacillus subtilis.</title>
        <authorList>
            <person name="Takami H."/>
            <person name="Nakasone K."/>
            <person name="Takaki Y."/>
            <person name="Maeno G."/>
            <person name="Sasaki R."/>
            <person name="Masui N."/>
            <person name="Fuji F."/>
            <person name="Hirama C."/>
            <person name="Nakamura Y."/>
            <person name="Ogasawara N."/>
            <person name="Kuhara S."/>
            <person name="Horikoshi K."/>
        </authorList>
    </citation>
    <scope>NUCLEOTIDE SEQUENCE [LARGE SCALE GENOMIC DNA]</scope>
    <source>
        <strain>ATCC BAA-125 / DSM 18197 / FERM 7344 / JCM 9153 / C-125</strain>
    </source>
</reference>
<proteinExistence type="inferred from homology"/>
<accession>Q9KF57</accession>
<feature type="chain" id="PRO_0000100436" description="Phosphoribosylformylglycinamidine synthase subunit PurL">
    <location>
        <begin position="1"/>
        <end position="743"/>
    </location>
</feature>
<feature type="active site" evidence="1">
    <location>
        <position position="54"/>
    </location>
</feature>
<feature type="active site" description="Proton acceptor" evidence="1">
    <location>
        <position position="100"/>
    </location>
</feature>
<feature type="binding site" evidence="1">
    <location>
        <position position="57"/>
    </location>
    <ligand>
        <name>ATP</name>
        <dbReference type="ChEBI" id="CHEBI:30616"/>
    </ligand>
</feature>
<feature type="binding site" evidence="1">
    <location>
        <position position="96"/>
    </location>
    <ligand>
        <name>ATP</name>
        <dbReference type="ChEBI" id="CHEBI:30616"/>
    </ligand>
</feature>
<feature type="binding site" evidence="1">
    <location>
        <position position="98"/>
    </location>
    <ligand>
        <name>Mg(2+)</name>
        <dbReference type="ChEBI" id="CHEBI:18420"/>
        <label>1</label>
    </ligand>
</feature>
<feature type="binding site" evidence="1">
    <location>
        <begin position="99"/>
        <end position="102"/>
    </location>
    <ligand>
        <name>substrate</name>
    </ligand>
</feature>
<feature type="binding site" evidence="1">
    <location>
        <position position="121"/>
    </location>
    <ligand>
        <name>substrate</name>
    </ligand>
</feature>
<feature type="binding site" evidence="1">
    <location>
        <position position="122"/>
    </location>
    <ligand>
        <name>Mg(2+)</name>
        <dbReference type="ChEBI" id="CHEBI:18420"/>
        <label>2</label>
    </ligand>
</feature>
<feature type="binding site" evidence="1">
    <location>
        <position position="245"/>
    </location>
    <ligand>
        <name>substrate</name>
    </ligand>
</feature>
<feature type="binding site" evidence="1">
    <location>
        <position position="273"/>
    </location>
    <ligand>
        <name>Mg(2+)</name>
        <dbReference type="ChEBI" id="CHEBI:18420"/>
        <label>2</label>
    </ligand>
</feature>
<feature type="binding site" evidence="1">
    <location>
        <begin position="317"/>
        <end position="319"/>
    </location>
    <ligand>
        <name>substrate</name>
    </ligand>
</feature>
<feature type="binding site" evidence="1">
    <location>
        <position position="501"/>
    </location>
    <ligand>
        <name>ATP</name>
        <dbReference type="ChEBI" id="CHEBI:30616"/>
    </ligand>
</feature>
<feature type="binding site" evidence="1">
    <location>
        <position position="538"/>
    </location>
    <ligand>
        <name>ATP</name>
        <dbReference type="ChEBI" id="CHEBI:30616"/>
    </ligand>
</feature>
<feature type="binding site" evidence="1">
    <location>
        <position position="539"/>
    </location>
    <ligand>
        <name>Mg(2+)</name>
        <dbReference type="ChEBI" id="CHEBI:18420"/>
        <label>1</label>
    </ligand>
</feature>
<feature type="binding site" evidence="1">
    <location>
        <position position="541"/>
    </location>
    <ligand>
        <name>substrate</name>
    </ligand>
</feature>
<protein>
    <recommendedName>
        <fullName evidence="1">Phosphoribosylformylglycinamidine synthase subunit PurL</fullName>
        <shortName evidence="1">FGAM synthase</shortName>
        <ecNumber evidence="1">6.3.5.3</ecNumber>
    </recommendedName>
    <alternativeName>
        <fullName evidence="1">Formylglycinamide ribonucleotide amidotransferase subunit II</fullName>
        <shortName evidence="1">FGAR amidotransferase II</shortName>
        <shortName evidence="1">FGAR-AT II</shortName>
    </alternativeName>
    <alternativeName>
        <fullName evidence="1">Glutamine amidotransferase PurL</fullName>
    </alternativeName>
    <alternativeName>
        <fullName evidence="1">Phosphoribosylformylglycinamidine synthase subunit II</fullName>
    </alternativeName>
</protein>
<comment type="function">
    <text evidence="1">Part of the phosphoribosylformylglycinamidine synthase complex involved in the purines biosynthetic pathway. Catalyzes the ATP-dependent conversion of formylglycinamide ribonucleotide (FGAR) and glutamine to yield formylglycinamidine ribonucleotide (FGAM) and glutamate. The FGAM synthase complex is composed of three subunits. PurQ produces an ammonia molecule by converting glutamine to glutamate. PurL transfers the ammonia molecule to FGAR to form FGAM in an ATP-dependent manner. PurS interacts with PurQ and PurL and is thought to assist in the transfer of the ammonia molecule from PurQ to PurL.</text>
</comment>
<comment type="catalytic activity">
    <reaction evidence="1">
        <text>N(2)-formyl-N(1)-(5-phospho-beta-D-ribosyl)glycinamide + L-glutamine + ATP + H2O = 2-formamido-N(1)-(5-O-phospho-beta-D-ribosyl)acetamidine + L-glutamate + ADP + phosphate + H(+)</text>
        <dbReference type="Rhea" id="RHEA:17129"/>
        <dbReference type="ChEBI" id="CHEBI:15377"/>
        <dbReference type="ChEBI" id="CHEBI:15378"/>
        <dbReference type="ChEBI" id="CHEBI:29985"/>
        <dbReference type="ChEBI" id="CHEBI:30616"/>
        <dbReference type="ChEBI" id="CHEBI:43474"/>
        <dbReference type="ChEBI" id="CHEBI:58359"/>
        <dbReference type="ChEBI" id="CHEBI:147286"/>
        <dbReference type="ChEBI" id="CHEBI:147287"/>
        <dbReference type="ChEBI" id="CHEBI:456216"/>
        <dbReference type="EC" id="6.3.5.3"/>
    </reaction>
</comment>
<comment type="pathway">
    <text evidence="1">Purine metabolism; IMP biosynthesis via de novo pathway; 5-amino-1-(5-phospho-D-ribosyl)imidazole from N(2)-formyl-N(1)-(5-phospho-D-ribosyl)glycinamide: step 1/2.</text>
</comment>
<comment type="subunit">
    <text evidence="1">Monomer. Part of the FGAM synthase complex composed of 1 PurL, 1 PurQ and 2 PurS subunits.</text>
</comment>
<comment type="subcellular location">
    <subcellularLocation>
        <location evidence="1">Cytoplasm</location>
    </subcellularLocation>
</comment>
<comment type="similarity">
    <text evidence="1">Belongs to the FGAMS family.</text>
</comment>
<dbReference type="EC" id="6.3.5.3" evidence="1"/>
<dbReference type="EMBL" id="BA000004">
    <property type="protein sequence ID" value="BAB04348.1"/>
    <property type="molecule type" value="Genomic_DNA"/>
</dbReference>
<dbReference type="PIR" id="E83728">
    <property type="entry name" value="E83728"/>
</dbReference>
<dbReference type="RefSeq" id="WP_010896805.1">
    <property type="nucleotide sequence ID" value="NC_002570.2"/>
</dbReference>
<dbReference type="SMR" id="Q9KF57"/>
<dbReference type="STRING" id="272558.gene:10726503"/>
<dbReference type="KEGG" id="bha:BH0629"/>
<dbReference type="eggNOG" id="COG0046">
    <property type="taxonomic scope" value="Bacteria"/>
</dbReference>
<dbReference type="HOGENOM" id="CLU_003100_0_1_9"/>
<dbReference type="OrthoDB" id="9804441at2"/>
<dbReference type="UniPathway" id="UPA00074">
    <property type="reaction ID" value="UER00128"/>
</dbReference>
<dbReference type="Proteomes" id="UP000001258">
    <property type="component" value="Chromosome"/>
</dbReference>
<dbReference type="GO" id="GO:0005737">
    <property type="term" value="C:cytoplasm"/>
    <property type="evidence" value="ECO:0007669"/>
    <property type="project" value="UniProtKB-SubCell"/>
</dbReference>
<dbReference type="GO" id="GO:0005524">
    <property type="term" value="F:ATP binding"/>
    <property type="evidence" value="ECO:0007669"/>
    <property type="project" value="UniProtKB-UniRule"/>
</dbReference>
<dbReference type="GO" id="GO:0000287">
    <property type="term" value="F:magnesium ion binding"/>
    <property type="evidence" value="ECO:0007669"/>
    <property type="project" value="UniProtKB-UniRule"/>
</dbReference>
<dbReference type="GO" id="GO:0004642">
    <property type="term" value="F:phosphoribosylformylglycinamidine synthase activity"/>
    <property type="evidence" value="ECO:0007669"/>
    <property type="project" value="UniProtKB-UniRule"/>
</dbReference>
<dbReference type="GO" id="GO:0006189">
    <property type="term" value="P:'de novo' IMP biosynthetic process"/>
    <property type="evidence" value="ECO:0007669"/>
    <property type="project" value="UniProtKB-UniRule"/>
</dbReference>
<dbReference type="CDD" id="cd02203">
    <property type="entry name" value="PurL_repeat1"/>
    <property type="match status" value="1"/>
</dbReference>
<dbReference type="CDD" id="cd02204">
    <property type="entry name" value="PurL_repeat2"/>
    <property type="match status" value="1"/>
</dbReference>
<dbReference type="FunFam" id="3.30.1330.10:FF:000004">
    <property type="entry name" value="Phosphoribosylformylglycinamidine synthase subunit PurL"/>
    <property type="match status" value="1"/>
</dbReference>
<dbReference type="FunFam" id="3.90.650.10:FF:000009">
    <property type="entry name" value="Phosphoribosylformylglycinamidine synthase subunit PurL"/>
    <property type="match status" value="1"/>
</dbReference>
<dbReference type="Gene3D" id="3.90.650.10">
    <property type="entry name" value="PurM-like C-terminal domain"/>
    <property type="match status" value="2"/>
</dbReference>
<dbReference type="Gene3D" id="3.30.1330.10">
    <property type="entry name" value="PurM-like, N-terminal domain"/>
    <property type="match status" value="2"/>
</dbReference>
<dbReference type="HAMAP" id="MF_00420">
    <property type="entry name" value="PurL_2"/>
    <property type="match status" value="1"/>
</dbReference>
<dbReference type="InterPro" id="IPR010074">
    <property type="entry name" value="PRibForGlyAmidine_synth_PurL"/>
</dbReference>
<dbReference type="InterPro" id="IPR041609">
    <property type="entry name" value="PurL_linker"/>
</dbReference>
<dbReference type="InterPro" id="IPR010918">
    <property type="entry name" value="PurM-like_C_dom"/>
</dbReference>
<dbReference type="InterPro" id="IPR036676">
    <property type="entry name" value="PurM-like_C_sf"/>
</dbReference>
<dbReference type="InterPro" id="IPR016188">
    <property type="entry name" value="PurM-like_N"/>
</dbReference>
<dbReference type="InterPro" id="IPR036921">
    <property type="entry name" value="PurM-like_N_sf"/>
</dbReference>
<dbReference type="NCBIfam" id="TIGR01736">
    <property type="entry name" value="FGAM_synth_II"/>
    <property type="match status" value="1"/>
</dbReference>
<dbReference type="NCBIfam" id="NF002290">
    <property type="entry name" value="PRK01213.1"/>
    <property type="match status" value="1"/>
</dbReference>
<dbReference type="PANTHER" id="PTHR43555">
    <property type="entry name" value="PHOSPHORIBOSYLFORMYLGLYCINAMIDINE SYNTHASE SUBUNIT PURL"/>
    <property type="match status" value="1"/>
</dbReference>
<dbReference type="PANTHER" id="PTHR43555:SF1">
    <property type="entry name" value="PHOSPHORIBOSYLFORMYLGLYCINAMIDINE SYNTHASE SUBUNIT PURL"/>
    <property type="match status" value="1"/>
</dbReference>
<dbReference type="Pfam" id="PF00586">
    <property type="entry name" value="AIRS"/>
    <property type="match status" value="2"/>
</dbReference>
<dbReference type="Pfam" id="PF02769">
    <property type="entry name" value="AIRS_C"/>
    <property type="match status" value="2"/>
</dbReference>
<dbReference type="Pfam" id="PF18072">
    <property type="entry name" value="FGAR-AT_linker"/>
    <property type="match status" value="1"/>
</dbReference>
<dbReference type="PIRSF" id="PIRSF001587">
    <property type="entry name" value="FGAM_synthase_II"/>
    <property type="match status" value="1"/>
</dbReference>
<dbReference type="SUPFAM" id="SSF56042">
    <property type="entry name" value="PurM C-terminal domain-like"/>
    <property type="match status" value="2"/>
</dbReference>
<dbReference type="SUPFAM" id="SSF55326">
    <property type="entry name" value="PurM N-terminal domain-like"/>
    <property type="match status" value="2"/>
</dbReference>
<name>PURL_HALH5</name>